<protein>
    <recommendedName>
        <fullName evidence="1">D-aminoacyl-tRNA deacylase</fullName>
        <shortName evidence="1">DTD</shortName>
        <ecNumber evidence="1">3.1.1.96</ecNumber>
    </recommendedName>
    <alternativeName>
        <fullName evidence="1">Gly-tRNA(Ala) deacylase</fullName>
    </alternativeName>
</protein>
<accession>Q48R77</accession>
<sequence>MKLVLQRVKEASVSIDGKIAGAINQGLLLLVGVGPDDNAEDLAYAVRKIVNMRIFSDADGKMNQSIQDIKGSILSVSQFTLYADTKKGNRPAFTGAAKPDLASQLYDSFNEQLAEFVPVERGVFGADMQVSLINDGPVTIILDTKCH</sequence>
<gene>
    <name evidence="1" type="primary">dtd</name>
    <name type="ordered locus">M28_Spy1673</name>
</gene>
<keyword id="KW-0963">Cytoplasm</keyword>
<keyword id="KW-0378">Hydrolase</keyword>
<keyword id="KW-0694">RNA-binding</keyword>
<keyword id="KW-0820">tRNA-binding</keyword>
<comment type="function">
    <text evidence="1">An aminoacyl-tRNA editing enzyme that deacylates mischarged D-aminoacyl-tRNAs. Also deacylates mischarged glycyl-tRNA(Ala), protecting cells against glycine mischarging by AlaRS. Acts via tRNA-based rather than protein-based catalysis; rejects L-amino acids rather than detecting D-amino acids in the active site. By recycling D-aminoacyl-tRNA to D-amino acids and free tRNA molecules, this enzyme counteracts the toxicity associated with the formation of D-aminoacyl-tRNA entities in vivo and helps enforce protein L-homochirality.</text>
</comment>
<comment type="catalytic activity">
    <reaction evidence="1">
        <text>glycyl-tRNA(Ala) + H2O = tRNA(Ala) + glycine + H(+)</text>
        <dbReference type="Rhea" id="RHEA:53744"/>
        <dbReference type="Rhea" id="RHEA-COMP:9657"/>
        <dbReference type="Rhea" id="RHEA-COMP:13640"/>
        <dbReference type="ChEBI" id="CHEBI:15377"/>
        <dbReference type="ChEBI" id="CHEBI:15378"/>
        <dbReference type="ChEBI" id="CHEBI:57305"/>
        <dbReference type="ChEBI" id="CHEBI:78442"/>
        <dbReference type="ChEBI" id="CHEBI:78522"/>
        <dbReference type="EC" id="3.1.1.96"/>
    </reaction>
</comment>
<comment type="catalytic activity">
    <reaction evidence="1">
        <text>a D-aminoacyl-tRNA + H2O = a tRNA + a D-alpha-amino acid + H(+)</text>
        <dbReference type="Rhea" id="RHEA:13953"/>
        <dbReference type="Rhea" id="RHEA-COMP:10123"/>
        <dbReference type="Rhea" id="RHEA-COMP:10124"/>
        <dbReference type="ChEBI" id="CHEBI:15377"/>
        <dbReference type="ChEBI" id="CHEBI:15378"/>
        <dbReference type="ChEBI" id="CHEBI:59871"/>
        <dbReference type="ChEBI" id="CHEBI:78442"/>
        <dbReference type="ChEBI" id="CHEBI:79333"/>
        <dbReference type="EC" id="3.1.1.96"/>
    </reaction>
</comment>
<comment type="subunit">
    <text evidence="1">Homodimer.</text>
</comment>
<comment type="subcellular location">
    <subcellularLocation>
        <location evidence="1">Cytoplasm</location>
    </subcellularLocation>
</comment>
<comment type="domain">
    <text evidence="1">A Gly-cisPro motif from one monomer fits into the active site of the other monomer to allow specific chiral rejection of L-amino acids.</text>
</comment>
<comment type="similarity">
    <text evidence="1">Belongs to the DTD family.</text>
</comment>
<feature type="chain" id="PRO_0000259324" description="D-aminoacyl-tRNA deacylase">
    <location>
        <begin position="1"/>
        <end position="147"/>
    </location>
</feature>
<feature type="short sequence motif" description="Gly-cisPro motif, important for rejection of L-amino acids" evidence="1">
    <location>
        <begin position="136"/>
        <end position="137"/>
    </location>
</feature>
<proteinExistence type="inferred from homology"/>
<dbReference type="EC" id="3.1.1.96" evidence="1"/>
<dbReference type="EMBL" id="CP000056">
    <property type="protein sequence ID" value="AAX72783.1"/>
    <property type="molecule type" value="Genomic_DNA"/>
</dbReference>
<dbReference type="RefSeq" id="WP_010922691.1">
    <property type="nucleotide sequence ID" value="NC_007296.2"/>
</dbReference>
<dbReference type="SMR" id="Q48R77"/>
<dbReference type="KEGG" id="spb:M28_Spy1673"/>
<dbReference type="HOGENOM" id="CLU_076901_1_0_9"/>
<dbReference type="GO" id="GO:0005737">
    <property type="term" value="C:cytoplasm"/>
    <property type="evidence" value="ECO:0007669"/>
    <property type="project" value="UniProtKB-SubCell"/>
</dbReference>
<dbReference type="GO" id="GO:0051500">
    <property type="term" value="F:D-tyrosyl-tRNA(Tyr) deacylase activity"/>
    <property type="evidence" value="ECO:0007669"/>
    <property type="project" value="TreeGrafter"/>
</dbReference>
<dbReference type="GO" id="GO:0106026">
    <property type="term" value="F:Gly-tRNA(Ala) deacylase activity"/>
    <property type="evidence" value="ECO:0007669"/>
    <property type="project" value="UniProtKB-UniRule"/>
</dbReference>
<dbReference type="GO" id="GO:0043908">
    <property type="term" value="F:Ser(Gly)-tRNA(Ala) hydrolase activity"/>
    <property type="evidence" value="ECO:0007669"/>
    <property type="project" value="UniProtKB-UniRule"/>
</dbReference>
<dbReference type="GO" id="GO:0000049">
    <property type="term" value="F:tRNA binding"/>
    <property type="evidence" value="ECO:0007669"/>
    <property type="project" value="UniProtKB-UniRule"/>
</dbReference>
<dbReference type="GO" id="GO:0019478">
    <property type="term" value="P:D-amino acid catabolic process"/>
    <property type="evidence" value="ECO:0007669"/>
    <property type="project" value="UniProtKB-UniRule"/>
</dbReference>
<dbReference type="CDD" id="cd00563">
    <property type="entry name" value="Dtyr_deacylase"/>
    <property type="match status" value="1"/>
</dbReference>
<dbReference type="FunFam" id="3.50.80.10:FF:000001">
    <property type="entry name" value="D-aminoacyl-tRNA deacylase"/>
    <property type="match status" value="1"/>
</dbReference>
<dbReference type="Gene3D" id="3.50.80.10">
    <property type="entry name" value="D-tyrosyl-tRNA(Tyr) deacylase"/>
    <property type="match status" value="1"/>
</dbReference>
<dbReference type="HAMAP" id="MF_00518">
    <property type="entry name" value="Deacylase_Dtd"/>
    <property type="match status" value="1"/>
</dbReference>
<dbReference type="InterPro" id="IPR003732">
    <property type="entry name" value="Daa-tRNA_deacyls_DTD"/>
</dbReference>
<dbReference type="InterPro" id="IPR023509">
    <property type="entry name" value="DTD-like_sf"/>
</dbReference>
<dbReference type="NCBIfam" id="TIGR00256">
    <property type="entry name" value="D-aminoacyl-tRNA deacylase"/>
    <property type="match status" value="1"/>
</dbReference>
<dbReference type="PANTHER" id="PTHR10472:SF5">
    <property type="entry name" value="D-AMINOACYL-TRNA DEACYLASE 1"/>
    <property type="match status" value="1"/>
</dbReference>
<dbReference type="PANTHER" id="PTHR10472">
    <property type="entry name" value="D-TYROSYL-TRNA TYR DEACYLASE"/>
    <property type="match status" value="1"/>
</dbReference>
<dbReference type="Pfam" id="PF02580">
    <property type="entry name" value="Tyr_Deacylase"/>
    <property type="match status" value="1"/>
</dbReference>
<dbReference type="SUPFAM" id="SSF69500">
    <property type="entry name" value="DTD-like"/>
    <property type="match status" value="1"/>
</dbReference>
<organism>
    <name type="scientific">Streptococcus pyogenes serotype M28 (strain MGAS6180)</name>
    <dbReference type="NCBI Taxonomy" id="319701"/>
    <lineage>
        <taxon>Bacteria</taxon>
        <taxon>Bacillati</taxon>
        <taxon>Bacillota</taxon>
        <taxon>Bacilli</taxon>
        <taxon>Lactobacillales</taxon>
        <taxon>Streptococcaceae</taxon>
        <taxon>Streptococcus</taxon>
    </lineage>
</organism>
<name>DTD_STRPM</name>
<reference key="1">
    <citation type="journal article" date="2005" name="J. Infect. Dis.">
        <title>Genome sequence of a serotype M28 strain of group A Streptococcus: potential new insights into puerperal sepsis and bacterial disease specificity.</title>
        <authorList>
            <person name="Green N.M."/>
            <person name="Zhang S."/>
            <person name="Porcella S.F."/>
            <person name="Nagiec M.J."/>
            <person name="Barbian K.D."/>
            <person name="Beres S.B."/>
            <person name="Lefebvre R.B."/>
            <person name="Musser J.M."/>
        </authorList>
    </citation>
    <scope>NUCLEOTIDE SEQUENCE [LARGE SCALE GENOMIC DNA]</scope>
    <source>
        <strain>MGAS6180</strain>
    </source>
</reference>
<evidence type="ECO:0000255" key="1">
    <source>
        <dbReference type="HAMAP-Rule" id="MF_00518"/>
    </source>
</evidence>